<organism>
    <name type="scientific">Rhodopseudomonas palustris (strain BisB18)</name>
    <dbReference type="NCBI Taxonomy" id="316056"/>
    <lineage>
        <taxon>Bacteria</taxon>
        <taxon>Pseudomonadati</taxon>
        <taxon>Pseudomonadota</taxon>
        <taxon>Alphaproteobacteria</taxon>
        <taxon>Hyphomicrobiales</taxon>
        <taxon>Nitrobacteraceae</taxon>
        <taxon>Rhodopseudomonas</taxon>
    </lineage>
</organism>
<gene>
    <name evidence="1" type="primary">rpsD</name>
    <name type="ordered locus">RPC_1603</name>
</gene>
<name>RS4_RHOPB</name>
<protein>
    <recommendedName>
        <fullName evidence="1">Small ribosomal subunit protein uS4</fullName>
    </recommendedName>
    <alternativeName>
        <fullName evidence="3">30S ribosomal protein S4</fullName>
    </alternativeName>
</protein>
<feature type="chain" id="PRO_0000293353" description="Small ribosomal subunit protein uS4">
    <location>
        <begin position="1"/>
        <end position="205"/>
    </location>
</feature>
<feature type="domain" description="S4 RNA-binding" evidence="1">
    <location>
        <begin position="94"/>
        <end position="157"/>
    </location>
</feature>
<feature type="region of interest" description="Disordered" evidence="2">
    <location>
        <begin position="18"/>
        <end position="46"/>
    </location>
</feature>
<comment type="function">
    <text evidence="1">One of the primary rRNA binding proteins, it binds directly to 16S rRNA where it nucleates assembly of the body of the 30S subunit.</text>
</comment>
<comment type="function">
    <text evidence="1">With S5 and S12 plays an important role in translational accuracy.</text>
</comment>
<comment type="subunit">
    <text evidence="1">Part of the 30S ribosomal subunit. Contacts protein S5. The interaction surface between S4 and S5 is involved in control of translational fidelity.</text>
</comment>
<comment type="similarity">
    <text evidence="1">Belongs to the universal ribosomal protein uS4 family.</text>
</comment>
<dbReference type="EMBL" id="CP000301">
    <property type="protein sequence ID" value="ABD87165.1"/>
    <property type="molecule type" value="Genomic_DNA"/>
</dbReference>
<dbReference type="SMR" id="Q218M1"/>
<dbReference type="STRING" id="316056.RPC_1603"/>
<dbReference type="KEGG" id="rpc:RPC_1603"/>
<dbReference type="eggNOG" id="COG0522">
    <property type="taxonomic scope" value="Bacteria"/>
</dbReference>
<dbReference type="HOGENOM" id="CLU_092403_0_0_5"/>
<dbReference type="OrthoDB" id="9803672at2"/>
<dbReference type="GO" id="GO:0015935">
    <property type="term" value="C:small ribosomal subunit"/>
    <property type="evidence" value="ECO:0007669"/>
    <property type="project" value="InterPro"/>
</dbReference>
<dbReference type="GO" id="GO:0019843">
    <property type="term" value="F:rRNA binding"/>
    <property type="evidence" value="ECO:0007669"/>
    <property type="project" value="UniProtKB-UniRule"/>
</dbReference>
<dbReference type="GO" id="GO:0003735">
    <property type="term" value="F:structural constituent of ribosome"/>
    <property type="evidence" value="ECO:0007669"/>
    <property type="project" value="InterPro"/>
</dbReference>
<dbReference type="GO" id="GO:0042274">
    <property type="term" value="P:ribosomal small subunit biogenesis"/>
    <property type="evidence" value="ECO:0007669"/>
    <property type="project" value="TreeGrafter"/>
</dbReference>
<dbReference type="GO" id="GO:0006412">
    <property type="term" value="P:translation"/>
    <property type="evidence" value="ECO:0007669"/>
    <property type="project" value="UniProtKB-UniRule"/>
</dbReference>
<dbReference type="CDD" id="cd00165">
    <property type="entry name" value="S4"/>
    <property type="match status" value="1"/>
</dbReference>
<dbReference type="FunFam" id="3.10.290.10:FF:000001">
    <property type="entry name" value="30S ribosomal protein S4"/>
    <property type="match status" value="1"/>
</dbReference>
<dbReference type="Gene3D" id="1.10.1050.10">
    <property type="entry name" value="Ribosomal Protein S4 Delta 41, Chain A, domain 1"/>
    <property type="match status" value="1"/>
</dbReference>
<dbReference type="Gene3D" id="3.10.290.10">
    <property type="entry name" value="RNA-binding S4 domain"/>
    <property type="match status" value="1"/>
</dbReference>
<dbReference type="HAMAP" id="MF_01306_B">
    <property type="entry name" value="Ribosomal_uS4_B"/>
    <property type="match status" value="1"/>
</dbReference>
<dbReference type="InterPro" id="IPR022801">
    <property type="entry name" value="Ribosomal_uS4"/>
</dbReference>
<dbReference type="InterPro" id="IPR005709">
    <property type="entry name" value="Ribosomal_uS4_bac-type"/>
</dbReference>
<dbReference type="InterPro" id="IPR018079">
    <property type="entry name" value="Ribosomal_uS4_CS"/>
</dbReference>
<dbReference type="InterPro" id="IPR001912">
    <property type="entry name" value="Ribosomal_uS4_N"/>
</dbReference>
<dbReference type="InterPro" id="IPR002942">
    <property type="entry name" value="S4_RNA-bd"/>
</dbReference>
<dbReference type="InterPro" id="IPR036986">
    <property type="entry name" value="S4_RNA-bd_sf"/>
</dbReference>
<dbReference type="NCBIfam" id="NF003717">
    <property type="entry name" value="PRK05327.1"/>
    <property type="match status" value="1"/>
</dbReference>
<dbReference type="NCBIfam" id="TIGR01017">
    <property type="entry name" value="rpsD_bact"/>
    <property type="match status" value="1"/>
</dbReference>
<dbReference type="PANTHER" id="PTHR11831">
    <property type="entry name" value="30S 40S RIBOSOMAL PROTEIN"/>
    <property type="match status" value="1"/>
</dbReference>
<dbReference type="PANTHER" id="PTHR11831:SF4">
    <property type="entry name" value="SMALL RIBOSOMAL SUBUNIT PROTEIN US4M"/>
    <property type="match status" value="1"/>
</dbReference>
<dbReference type="Pfam" id="PF00163">
    <property type="entry name" value="Ribosomal_S4"/>
    <property type="match status" value="1"/>
</dbReference>
<dbReference type="Pfam" id="PF01479">
    <property type="entry name" value="S4"/>
    <property type="match status" value="1"/>
</dbReference>
<dbReference type="SMART" id="SM01390">
    <property type="entry name" value="Ribosomal_S4"/>
    <property type="match status" value="1"/>
</dbReference>
<dbReference type="SMART" id="SM00363">
    <property type="entry name" value="S4"/>
    <property type="match status" value="1"/>
</dbReference>
<dbReference type="SUPFAM" id="SSF55174">
    <property type="entry name" value="Alpha-L RNA-binding motif"/>
    <property type="match status" value="1"/>
</dbReference>
<dbReference type="PROSITE" id="PS00632">
    <property type="entry name" value="RIBOSOMAL_S4"/>
    <property type="match status" value="1"/>
</dbReference>
<dbReference type="PROSITE" id="PS50889">
    <property type="entry name" value="S4"/>
    <property type="match status" value="1"/>
</dbReference>
<proteinExistence type="inferred from homology"/>
<reference key="1">
    <citation type="submission" date="2006-03" db="EMBL/GenBank/DDBJ databases">
        <title>Complete sequence of Rhodopseudomonas palustris BisB18.</title>
        <authorList>
            <consortium name="US DOE Joint Genome Institute"/>
            <person name="Copeland A."/>
            <person name="Lucas S."/>
            <person name="Lapidus A."/>
            <person name="Barry K."/>
            <person name="Detter J.C."/>
            <person name="Glavina del Rio T."/>
            <person name="Hammon N."/>
            <person name="Israni S."/>
            <person name="Dalin E."/>
            <person name="Tice H."/>
            <person name="Pitluck S."/>
            <person name="Chain P."/>
            <person name="Malfatti S."/>
            <person name="Shin M."/>
            <person name="Vergez L."/>
            <person name="Schmutz J."/>
            <person name="Larimer F."/>
            <person name="Land M."/>
            <person name="Hauser L."/>
            <person name="Pelletier D.A."/>
            <person name="Kyrpides N."/>
            <person name="Anderson I."/>
            <person name="Oda Y."/>
            <person name="Harwood C.S."/>
            <person name="Richardson P."/>
        </authorList>
    </citation>
    <scope>NUCLEOTIDE SEQUENCE [LARGE SCALE GENOMIC DNA]</scope>
    <source>
        <strain>BisB18</strain>
    </source>
</reference>
<sequence length="205" mass="23661">MTKRSEAKYKIDRRMGQNIWGRPKSPVNRREYGPGQHGQRRKGKLSDFGVQLRAKQKLKGYYANISERQFHSIYVEATRLKGDSGENLIGLLERRLDTVVYRAKFVSTMFAARQFINHGHVKVNGKRVNIASYKVKVGDLVEVKESSKQLTFVLEANQLAERDVPDFIEVDHGKMTAKFIRIPHLSDVPFAVQMEPHLIVEFYSR</sequence>
<accession>Q218M1</accession>
<evidence type="ECO:0000255" key="1">
    <source>
        <dbReference type="HAMAP-Rule" id="MF_01306"/>
    </source>
</evidence>
<evidence type="ECO:0000256" key="2">
    <source>
        <dbReference type="SAM" id="MobiDB-lite"/>
    </source>
</evidence>
<evidence type="ECO:0000305" key="3"/>
<keyword id="KW-0687">Ribonucleoprotein</keyword>
<keyword id="KW-0689">Ribosomal protein</keyword>
<keyword id="KW-0694">RNA-binding</keyword>
<keyword id="KW-0699">rRNA-binding</keyword>